<sequence>MMVLRVEELVTGKKNSNGAAGEFLPGEFRNGEYEAAVALEKQEDLKTLPANSVKQGEEQRKSEKLREAELKKKKLEQRSKLENLEDLEIIVQLKKRKKYKKTKVPVVKEPEPEIMTEPVDVPRFLKAALENKLPVVEKFLSDKNSPDVCDEYKRTALHRACLEGHLAIVEKLMEAGAQIEFRDMLESTAIHWACRGGNADVLKLLLNKGAKISARDKLLSTALHVAVRTGHYECAEHLIACEADLNAKDREGDTPLHDAVRLNRYKMIRLLMTFGADLKVKNCAGKTPMDLVLHWQSGTKAIFDSLKENAYKNSRIATF</sequence>
<comment type="function">
    <text evidence="4">May play an important role in endothelial cell activation. May act as a nuclear transcription factor that negatively regulates the expression of cardiac genes.</text>
</comment>
<comment type="subunit">
    <text evidence="1">Interacts with TTN/titin and YBX1.</text>
</comment>
<comment type="interaction">
    <interactant intactId="EBI-8308696">
        <id>Q9CR42</id>
    </interactant>
    <interactant intactId="EBI-641864">
        <id>P09405</id>
        <label>Ncl</label>
    </interactant>
    <organismsDiffer>false</organismsDiffer>
    <experiments>5</experiments>
</comment>
<comment type="interaction">
    <interactant intactId="EBI-8308696">
        <id>Q9CR42</id>
    </interactant>
    <interactant intactId="EBI-346967">
        <id>P19338</id>
        <label>NCL</label>
    </interactant>
    <organismsDiffer>true</organismsDiffer>
    <experiments>2</experiments>
</comment>
<comment type="subcellular location">
    <subcellularLocation>
        <location evidence="1">Nucleus</location>
    </subcellularLocation>
</comment>
<comment type="tissue specificity">
    <text evidence="4">Expressed in heart, cardiac muscle.</text>
</comment>
<comment type="developmental stage">
    <text evidence="4 5">Expression was first clearly detected as early as 8.5 dpc specifically in heart and is regulated temporally and spatially in the myocardium. Transcripts are present in uniformly high levels in the myocardium. Throughout cardiac development, expression is specific for the myocardium; endocardial cushions and valves exhibit only background levels of signal. Transcript levels persist but gradually decrease in neonatal, 2-week-old, and adult hearts.</text>
</comment>
<name>ANKR1_MOUSE</name>
<reference key="1">
    <citation type="journal article" date="1997" name="Development">
        <title>CARP, a cardiac ankyrin repeat protein, is downstream in the Nkx2-5 homeobox gene pathway.</title>
        <authorList>
            <person name="Zou Y."/>
            <person name="Evans S."/>
            <person name="Chen J."/>
            <person name="Kuo H.-C."/>
            <person name="Harvey R.P."/>
            <person name="Chien K.R."/>
        </authorList>
    </citation>
    <scope>NUCLEOTIDE SEQUENCE [MRNA]</scope>
    <scope>DEVELOPMENTAL STAGE</scope>
    <scope>TISSUE SPECIFICITY</scope>
    <scope>FUNCTION</scope>
    <source>
        <tissue>Heart</tissue>
    </source>
</reference>
<reference key="2">
    <citation type="journal article" date="2005" name="Science">
        <title>The transcriptional landscape of the mammalian genome.</title>
        <authorList>
            <person name="Carninci P."/>
            <person name="Kasukawa T."/>
            <person name="Katayama S."/>
            <person name="Gough J."/>
            <person name="Frith M.C."/>
            <person name="Maeda N."/>
            <person name="Oyama R."/>
            <person name="Ravasi T."/>
            <person name="Lenhard B."/>
            <person name="Wells C."/>
            <person name="Kodzius R."/>
            <person name="Shimokawa K."/>
            <person name="Bajic V.B."/>
            <person name="Brenner S.E."/>
            <person name="Batalov S."/>
            <person name="Forrest A.R."/>
            <person name="Zavolan M."/>
            <person name="Davis M.J."/>
            <person name="Wilming L.G."/>
            <person name="Aidinis V."/>
            <person name="Allen J.E."/>
            <person name="Ambesi-Impiombato A."/>
            <person name="Apweiler R."/>
            <person name="Aturaliya R.N."/>
            <person name="Bailey T.L."/>
            <person name="Bansal M."/>
            <person name="Baxter L."/>
            <person name="Beisel K.W."/>
            <person name="Bersano T."/>
            <person name="Bono H."/>
            <person name="Chalk A.M."/>
            <person name="Chiu K.P."/>
            <person name="Choudhary V."/>
            <person name="Christoffels A."/>
            <person name="Clutterbuck D.R."/>
            <person name="Crowe M.L."/>
            <person name="Dalla E."/>
            <person name="Dalrymple B.P."/>
            <person name="de Bono B."/>
            <person name="Della Gatta G."/>
            <person name="di Bernardo D."/>
            <person name="Down T."/>
            <person name="Engstrom P."/>
            <person name="Fagiolini M."/>
            <person name="Faulkner G."/>
            <person name="Fletcher C.F."/>
            <person name="Fukushima T."/>
            <person name="Furuno M."/>
            <person name="Futaki S."/>
            <person name="Gariboldi M."/>
            <person name="Georgii-Hemming P."/>
            <person name="Gingeras T.R."/>
            <person name="Gojobori T."/>
            <person name="Green R.E."/>
            <person name="Gustincich S."/>
            <person name="Harbers M."/>
            <person name="Hayashi Y."/>
            <person name="Hensch T.K."/>
            <person name="Hirokawa N."/>
            <person name="Hill D."/>
            <person name="Huminiecki L."/>
            <person name="Iacono M."/>
            <person name="Ikeo K."/>
            <person name="Iwama A."/>
            <person name="Ishikawa T."/>
            <person name="Jakt M."/>
            <person name="Kanapin A."/>
            <person name="Katoh M."/>
            <person name="Kawasawa Y."/>
            <person name="Kelso J."/>
            <person name="Kitamura H."/>
            <person name="Kitano H."/>
            <person name="Kollias G."/>
            <person name="Krishnan S.P."/>
            <person name="Kruger A."/>
            <person name="Kummerfeld S.K."/>
            <person name="Kurochkin I.V."/>
            <person name="Lareau L.F."/>
            <person name="Lazarevic D."/>
            <person name="Lipovich L."/>
            <person name="Liu J."/>
            <person name="Liuni S."/>
            <person name="McWilliam S."/>
            <person name="Madan Babu M."/>
            <person name="Madera M."/>
            <person name="Marchionni L."/>
            <person name="Matsuda H."/>
            <person name="Matsuzawa S."/>
            <person name="Miki H."/>
            <person name="Mignone F."/>
            <person name="Miyake S."/>
            <person name="Morris K."/>
            <person name="Mottagui-Tabar S."/>
            <person name="Mulder N."/>
            <person name="Nakano N."/>
            <person name="Nakauchi H."/>
            <person name="Ng P."/>
            <person name="Nilsson R."/>
            <person name="Nishiguchi S."/>
            <person name="Nishikawa S."/>
            <person name="Nori F."/>
            <person name="Ohara O."/>
            <person name="Okazaki Y."/>
            <person name="Orlando V."/>
            <person name="Pang K.C."/>
            <person name="Pavan W.J."/>
            <person name="Pavesi G."/>
            <person name="Pesole G."/>
            <person name="Petrovsky N."/>
            <person name="Piazza S."/>
            <person name="Reed J."/>
            <person name="Reid J.F."/>
            <person name="Ring B.Z."/>
            <person name="Ringwald M."/>
            <person name="Rost B."/>
            <person name="Ruan Y."/>
            <person name="Salzberg S.L."/>
            <person name="Sandelin A."/>
            <person name="Schneider C."/>
            <person name="Schoenbach C."/>
            <person name="Sekiguchi K."/>
            <person name="Semple C.A."/>
            <person name="Seno S."/>
            <person name="Sessa L."/>
            <person name="Sheng Y."/>
            <person name="Shibata Y."/>
            <person name="Shimada H."/>
            <person name="Shimada K."/>
            <person name="Silva D."/>
            <person name="Sinclair B."/>
            <person name="Sperling S."/>
            <person name="Stupka E."/>
            <person name="Sugiura K."/>
            <person name="Sultana R."/>
            <person name="Takenaka Y."/>
            <person name="Taki K."/>
            <person name="Tammoja K."/>
            <person name="Tan S.L."/>
            <person name="Tang S."/>
            <person name="Taylor M.S."/>
            <person name="Tegner J."/>
            <person name="Teichmann S.A."/>
            <person name="Ueda H.R."/>
            <person name="van Nimwegen E."/>
            <person name="Verardo R."/>
            <person name="Wei C.L."/>
            <person name="Yagi K."/>
            <person name="Yamanishi H."/>
            <person name="Zabarovsky E."/>
            <person name="Zhu S."/>
            <person name="Zimmer A."/>
            <person name="Hide W."/>
            <person name="Bult C."/>
            <person name="Grimmond S.M."/>
            <person name="Teasdale R.D."/>
            <person name="Liu E.T."/>
            <person name="Brusic V."/>
            <person name="Quackenbush J."/>
            <person name="Wahlestedt C."/>
            <person name="Mattick J.S."/>
            <person name="Hume D.A."/>
            <person name="Kai C."/>
            <person name="Sasaki D."/>
            <person name="Tomaru Y."/>
            <person name="Fukuda S."/>
            <person name="Kanamori-Katayama M."/>
            <person name="Suzuki M."/>
            <person name="Aoki J."/>
            <person name="Arakawa T."/>
            <person name="Iida J."/>
            <person name="Imamura K."/>
            <person name="Itoh M."/>
            <person name="Kato T."/>
            <person name="Kawaji H."/>
            <person name="Kawagashira N."/>
            <person name="Kawashima T."/>
            <person name="Kojima M."/>
            <person name="Kondo S."/>
            <person name="Konno H."/>
            <person name="Nakano K."/>
            <person name="Ninomiya N."/>
            <person name="Nishio T."/>
            <person name="Okada M."/>
            <person name="Plessy C."/>
            <person name="Shibata K."/>
            <person name="Shiraki T."/>
            <person name="Suzuki S."/>
            <person name="Tagami M."/>
            <person name="Waki K."/>
            <person name="Watahiki A."/>
            <person name="Okamura-Oho Y."/>
            <person name="Suzuki H."/>
            <person name="Kawai J."/>
            <person name="Hayashizaki Y."/>
        </authorList>
    </citation>
    <scope>NUCLEOTIDE SEQUENCE [LARGE SCALE MRNA]</scope>
    <source>
        <strain>C57BL/6J</strain>
        <tissue>Heart</tissue>
    </source>
</reference>
<reference key="3">
    <citation type="journal article" date="2004" name="Genome Res.">
        <title>The status, quality, and expansion of the NIH full-length cDNA project: the Mammalian Gene Collection (MGC).</title>
        <authorList>
            <consortium name="The MGC Project Team"/>
        </authorList>
    </citation>
    <scope>NUCLEOTIDE SEQUENCE [LARGE SCALE MRNA]</scope>
    <source>
        <strain>FVB/N</strain>
        <tissue>Mammary tumor</tissue>
    </source>
</reference>
<reference key="4">
    <citation type="submission" date="1998-01" db="EMBL/GenBank/DDBJ databases">
        <authorList>
            <person name="Schoenfeld J.R."/>
            <person name="Lowe D.G."/>
            <person name="Zou Y."/>
            <person name="Chen J."/>
        </authorList>
    </citation>
    <scope>NUCLEOTIDE SEQUENCE [MRNA] OF 103-176</scope>
</reference>
<reference key="5">
    <citation type="journal article" date="1997" name="J. Biol. Chem.">
        <title>A novel cardiac-restricted target for doxorubicin. CARP, a nuclear modulator of gene expression in cardiac progenitor cells and cardiomyocytes.</title>
        <authorList>
            <person name="Jeyaseelan R."/>
            <person name="Poizat C."/>
            <person name="Baker R.K."/>
            <person name="Abdishoo S."/>
            <person name="Isterabadi L.B."/>
            <person name="Lyons G.E."/>
            <person name="Kedes L."/>
        </authorList>
    </citation>
    <scope>DEVELOPMENTAL STAGE</scope>
</reference>
<gene>
    <name type="primary">Ankrd1</name>
    <name type="synonym">Carp</name>
</gene>
<proteinExistence type="evidence at protein level"/>
<keyword id="KW-0040">ANK repeat</keyword>
<keyword id="KW-0175">Coiled coil</keyword>
<keyword id="KW-0539">Nucleus</keyword>
<keyword id="KW-1185">Reference proteome</keyword>
<keyword id="KW-0677">Repeat</keyword>
<protein>
    <recommendedName>
        <fullName>Ankyrin repeat domain-containing protein 1</fullName>
    </recommendedName>
    <alternativeName>
        <fullName>Cardiac ankyrin repeat protein</fullName>
    </alternativeName>
</protein>
<organism>
    <name type="scientific">Mus musculus</name>
    <name type="common">Mouse</name>
    <dbReference type="NCBI Taxonomy" id="10090"/>
    <lineage>
        <taxon>Eukaryota</taxon>
        <taxon>Metazoa</taxon>
        <taxon>Chordata</taxon>
        <taxon>Craniata</taxon>
        <taxon>Vertebrata</taxon>
        <taxon>Euteleostomi</taxon>
        <taxon>Mammalia</taxon>
        <taxon>Eutheria</taxon>
        <taxon>Euarchontoglires</taxon>
        <taxon>Glires</taxon>
        <taxon>Rodentia</taxon>
        <taxon>Myomorpha</taxon>
        <taxon>Muroidea</taxon>
        <taxon>Muridae</taxon>
        <taxon>Murinae</taxon>
        <taxon>Mus</taxon>
        <taxon>Mus</taxon>
    </lineage>
</organism>
<feature type="chain" id="PRO_0000240480" description="Ankyrin repeat domain-containing protein 1">
    <location>
        <begin position="1"/>
        <end position="319"/>
    </location>
</feature>
<feature type="repeat" description="ANK 1">
    <location>
        <begin position="152"/>
        <end position="181"/>
    </location>
</feature>
<feature type="repeat" description="ANK 2">
    <location>
        <begin position="185"/>
        <end position="214"/>
    </location>
</feature>
<feature type="repeat" description="ANK 3">
    <location>
        <begin position="218"/>
        <end position="247"/>
    </location>
</feature>
<feature type="repeat" description="ANK 4">
    <location>
        <begin position="251"/>
        <end position="280"/>
    </location>
</feature>
<feature type="repeat" description="ANK 5">
    <location>
        <begin position="284"/>
        <end position="315"/>
    </location>
</feature>
<feature type="region of interest" description="Disordered" evidence="3">
    <location>
        <begin position="46"/>
        <end position="65"/>
    </location>
</feature>
<feature type="coiled-coil region" evidence="2">
    <location>
        <begin position="53"/>
        <end position="89"/>
    </location>
</feature>
<feature type="compositionally biased region" description="Basic and acidic residues" evidence="3">
    <location>
        <begin position="55"/>
        <end position="65"/>
    </location>
</feature>
<feature type="sequence conflict" description="In Ref. 2; BAE27549." evidence="6" ref="2">
    <original>L</original>
    <variation>F</variation>
    <location>
        <position position="48"/>
    </location>
</feature>
<feature type="sequence conflict" description="In Ref. 1; AAC03533 and 4; AAB97080." evidence="6" ref="1 4">
    <original>FL</original>
    <variation>LV</variation>
    <location>
        <begin position="139"/>
        <end position="140"/>
    </location>
</feature>
<feature type="sequence conflict" description="In Ref. 2; BAE27316." evidence="6" ref="2">
    <original>T</original>
    <variation>N</variation>
    <location>
        <position position="299"/>
    </location>
</feature>
<feature type="sequence conflict" description="In Ref. 1; AAC03533." evidence="6" ref="1">
    <original>L</original>
    <variation>P</variation>
    <location>
        <position position="306"/>
    </location>
</feature>
<dbReference type="EMBL" id="AF041847">
    <property type="protein sequence ID" value="AAC03533.1"/>
    <property type="molecule type" value="mRNA"/>
</dbReference>
<dbReference type="EMBL" id="AK009655">
    <property type="protein sequence ID" value="BAB26419.1"/>
    <property type="molecule type" value="mRNA"/>
</dbReference>
<dbReference type="EMBL" id="AK009959">
    <property type="protein sequence ID" value="BAB26611.1"/>
    <property type="molecule type" value="mRNA"/>
</dbReference>
<dbReference type="EMBL" id="AK145944">
    <property type="protein sequence ID" value="BAE26773.1"/>
    <property type="molecule type" value="mRNA"/>
</dbReference>
<dbReference type="EMBL" id="AK146471">
    <property type="protein sequence ID" value="BAE27197.1"/>
    <property type="molecule type" value="mRNA"/>
</dbReference>
<dbReference type="EMBL" id="AK146627">
    <property type="protein sequence ID" value="BAE27316.1"/>
    <property type="molecule type" value="mRNA"/>
</dbReference>
<dbReference type="EMBL" id="AK146940">
    <property type="protein sequence ID" value="BAE27549.1"/>
    <property type="molecule type" value="mRNA"/>
</dbReference>
<dbReference type="EMBL" id="BC037138">
    <property type="protein sequence ID" value="AAH37138.1"/>
    <property type="molecule type" value="mRNA"/>
</dbReference>
<dbReference type="EMBL" id="AF041849">
    <property type="protein sequence ID" value="AAB97080.1"/>
    <property type="molecule type" value="mRNA"/>
</dbReference>
<dbReference type="CCDS" id="CCDS29771.1"/>
<dbReference type="RefSeq" id="NP_038496.2">
    <property type="nucleotide sequence ID" value="NM_013468.3"/>
</dbReference>
<dbReference type="SMR" id="Q9CR42"/>
<dbReference type="BioGRID" id="223553">
    <property type="interactions" value="2"/>
</dbReference>
<dbReference type="FunCoup" id="Q9CR42">
    <property type="interactions" value="241"/>
</dbReference>
<dbReference type="IntAct" id="Q9CR42">
    <property type="interactions" value="29"/>
</dbReference>
<dbReference type="MINT" id="Q9CR42"/>
<dbReference type="STRING" id="10090.ENSMUSP00000157960"/>
<dbReference type="MoonDB" id="Q9CR42">
    <property type="type" value="Predicted"/>
</dbReference>
<dbReference type="iPTMnet" id="Q9CR42"/>
<dbReference type="PhosphoSitePlus" id="Q9CR42"/>
<dbReference type="jPOST" id="Q9CR42"/>
<dbReference type="PaxDb" id="10090-ENSMUSP00000025718"/>
<dbReference type="ProteomicsDB" id="281984"/>
<dbReference type="Antibodypedia" id="30337">
    <property type="antibodies" value="257 antibodies from 28 providers"/>
</dbReference>
<dbReference type="DNASU" id="107765"/>
<dbReference type="Ensembl" id="ENSMUST00000237142.2">
    <property type="protein sequence ID" value="ENSMUSP00000157960.2"/>
    <property type="gene ID" value="ENSMUSG00000024803.10"/>
</dbReference>
<dbReference type="GeneID" id="107765"/>
<dbReference type="KEGG" id="mmu:107765"/>
<dbReference type="UCSC" id="uc008hhh.1">
    <property type="organism name" value="mouse"/>
</dbReference>
<dbReference type="AGR" id="MGI:1097717"/>
<dbReference type="CTD" id="27063"/>
<dbReference type="MGI" id="MGI:1097717">
    <property type="gene designation" value="Ankrd1"/>
</dbReference>
<dbReference type="VEuPathDB" id="HostDB:ENSMUSG00000024803"/>
<dbReference type="eggNOG" id="KOG0504">
    <property type="taxonomic scope" value="Eukaryota"/>
</dbReference>
<dbReference type="GeneTree" id="ENSGT00940000153956"/>
<dbReference type="HOGENOM" id="CLU_000134_11_1_1"/>
<dbReference type="InParanoid" id="Q9CR42"/>
<dbReference type="OMA" id="QYDCGEH"/>
<dbReference type="OrthoDB" id="426293at2759"/>
<dbReference type="PhylomeDB" id="Q9CR42"/>
<dbReference type="TreeFam" id="TF331650"/>
<dbReference type="BioGRID-ORCS" id="107765">
    <property type="hits" value="0 hits in 78 CRISPR screens"/>
</dbReference>
<dbReference type="ChiTaRS" id="Car8">
    <property type="organism name" value="mouse"/>
</dbReference>
<dbReference type="PRO" id="PR:Q9CR42"/>
<dbReference type="Proteomes" id="UP000000589">
    <property type="component" value="Chromosome 19"/>
</dbReference>
<dbReference type="RNAct" id="Q9CR42">
    <property type="molecule type" value="protein"/>
</dbReference>
<dbReference type="Bgee" id="ENSMUSG00000024803">
    <property type="expression patterns" value="Expressed in cardiac muscle of left ventricle and 103 other cell types or tissues"/>
</dbReference>
<dbReference type="ExpressionAtlas" id="Q9CR42">
    <property type="expression patterns" value="baseline and differential"/>
</dbReference>
<dbReference type="GO" id="GO:0005737">
    <property type="term" value="C:cytoplasm"/>
    <property type="evidence" value="ECO:0000314"/>
    <property type="project" value="UniProtKB"/>
</dbReference>
<dbReference type="GO" id="GO:0005829">
    <property type="term" value="C:cytosol"/>
    <property type="evidence" value="ECO:0007669"/>
    <property type="project" value="Ensembl"/>
</dbReference>
<dbReference type="GO" id="GO:0001650">
    <property type="term" value="C:fibrillar center"/>
    <property type="evidence" value="ECO:0007669"/>
    <property type="project" value="Ensembl"/>
</dbReference>
<dbReference type="GO" id="GO:0031674">
    <property type="term" value="C:I band"/>
    <property type="evidence" value="ECO:0000314"/>
    <property type="project" value="BHF-UCL"/>
</dbReference>
<dbReference type="GO" id="GO:0030016">
    <property type="term" value="C:myofibril"/>
    <property type="evidence" value="ECO:0000314"/>
    <property type="project" value="UniProtKB"/>
</dbReference>
<dbReference type="GO" id="GO:0005654">
    <property type="term" value="C:nucleoplasm"/>
    <property type="evidence" value="ECO:0007669"/>
    <property type="project" value="Ensembl"/>
</dbReference>
<dbReference type="GO" id="GO:0005634">
    <property type="term" value="C:nucleus"/>
    <property type="evidence" value="ECO:0000314"/>
    <property type="project" value="MGI"/>
</dbReference>
<dbReference type="GO" id="GO:0032991">
    <property type="term" value="C:protein-containing complex"/>
    <property type="evidence" value="ECO:0000314"/>
    <property type="project" value="MGI"/>
</dbReference>
<dbReference type="GO" id="GO:0005667">
    <property type="term" value="C:transcription regulator complex"/>
    <property type="evidence" value="ECO:0000314"/>
    <property type="project" value="MGI"/>
</dbReference>
<dbReference type="GO" id="GO:0003677">
    <property type="term" value="F:DNA binding"/>
    <property type="evidence" value="ECO:0007669"/>
    <property type="project" value="Ensembl"/>
</dbReference>
<dbReference type="GO" id="GO:0042826">
    <property type="term" value="F:histone deacetylase binding"/>
    <property type="evidence" value="ECO:0007669"/>
    <property type="project" value="Ensembl"/>
</dbReference>
<dbReference type="GO" id="GO:0002039">
    <property type="term" value="F:p53 binding"/>
    <property type="evidence" value="ECO:0007669"/>
    <property type="project" value="Ensembl"/>
</dbReference>
<dbReference type="GO" id="GO:0070412">
    <property type="term" value="F:R-SMAD binding"/>
    <property type="evidence" value="ECO:0007669"/>
    <property type="project" value="Ensembl"/>
</dbReference>
<dbReference type="GO" id="GO:0061629">
    <property type="term" value="F:RNA polymerase II-specific DNA-binding transcription factor binding"/>
    <property type="evidence" value="ECO:0007669"/>
    <property type="project" value="Ensembl"/>
</dbReference>
<dbReference type="GO" id="GO:0031432">
    <property type="term" value="F:titin binding"/>
    <property type="evidence" value="ECO:0000353"/>
    <property type="project" value="UniProtKB"/>
</dbReference>
<dbReference type="GO" id="GO:0003713">
    <property type="term" value="F:transcription coactivator activity"/>
    <property type="evidence" value="ECO:0007669"/>
    <property type="project" value="Ensembl"/>
</dbReference>
<dbReference type="GO" id="GO:0003714">
    <property type="term" value="F:transcription corepressor activity"/>
    <property type="evidence" value="ECO:0000314"/>
    <property type="project" value="MGI"/>
</dbReference>
<dbReference type="GO" id="GO:0055008">
    <property type="term" value="P:cardiac muscle tissue morphogenesis"/>
    <property type="evidence" value="ECO:0007669"/>
    <property type="project" value="Ensembl"/>
</dbReference>
<dbReference type="GO" id="GO:0071347">
    <property type="term" value="P:cellular response to interleukin-1"/>
    <property type="evidence" value="ECO:0007669"/>
    <property type="project" value="Ensembl"/>
</dbReference>
<dbReference type="GO" id="GO:0071222">
    <property type="term" value="P:cellular response to lipopolysaccharide"/>
    <property type="evidence" value="ECO:0000314"/>
    <property type="project" value="UniProtKB"/>
</dbReference>
<dbReference type="GO" id="GO:0071260">
    <property type="term" value="P:cellular response to mechanical stimulus"/>
    <property type="evidence" value="ECO:0007669"/>
    <property type="project" value="Ensembl"/>
</dbReference>
<dbReference type="GO" id="GO:0071560">
    <property type="term" value="P:cellular response to transforming growth factor beta stimulus"/>
    <property type="evidence" value="ECO:0007669"/>
    <property type="project" value="Ensembl"/>
</dbReference>
<dbReference type="GO" id="GO:0071356">
    <property type="term" value="P:cellular response to tumor necrosis factor"/>
    <property type="evidence" value="ECO:0007669"/>
    <property type="project" value="Ensembl"/>
</dbReference>
<dbReference type="GO" id="GO:0071466">
    <property type="term" value="P:cellular response to xenobiotic stimulus"/>
    <property type="evidence" value="ECO:0000314"/>
    <property type="project" value="UniProtKB"/>
</dbReference>
<dbReference type="GO" id="GO:2000279">
    <property type="term" value="P:negative regulation of DNA biosynthetic process"/>
    <property type="evidence" value="ECO:0007669"/>
    <property type="project" value="Ensembl"/>
</dbReference>
<dbReference type="GO" id="GO:0141212">
    <property type="term" value="P:phospholipase C/protein kinase C signal transduction"/>
    <property type="evidence" value="ECO:0000316"/>
    <property type="project" value="MGI"/>
</dbReference>
<dbReference type="GO" id="GO:0043065">
    <property type="term" value="P:positive regulation of apoptotic process"/>
    <property type="evidence" value="ECO:0007669"/>
    <property type="project" value="Ensembl"/>
</dbReference>
<dbReference type="GO" id="GO:0043517">
    <property type="term" value="P:positive regulation of DNA damage response, signal transduction by p53 class mediator"/>
    <property type="evidence" value="ECO:0007669"/>
    <property type="project" value="Ensembl"/>
</dbReference>
<dbReference type="GO" id="GO:0050714">
    <property type="term" value="P:positive regulation of protein secretion"/>
    <property type="evidence" value="ECO:0007669"/>
    <property type="project" value="Ensembl"/>
</dbReference>
<dbReference type="GO" id="GO:0006357">
    <property type="term" value="P:regulation of transcription by RNA polymerase II"/>
    <property type="evidence" value="ECO:0000314"/>
    <property type="project" value="MGI"/>
</dbReference>
<dbReference type="GO" id="GO:0035994">
    <property type="term" value="P:response to muscle stretch"/>
    <property type="evidence" value="ECO:0007669"/>
    <property type="project" value="Ensembl"/>
</dbReference>
<dbReference type="GO" id="GO:0035914">
    <property type="term" value="P:skeletal muscle cell differentiation"/>
    <property type="evidence" value="ECO:0000315"/>
    <property type="project" value="MGI"/>
</dbReference>
<dbReference type="FunFam" id="1.25.40.20:FF:000111">
    <property type="entry name" value="Ankyrin repeat domain-containing protein 1"/>
    <property type="match status" value="1"/>
</dbReference>
<dbReference type="FunFam" id="1.25.40.20:FF:000369">
    <property type="entry name" value="Ankyrin repeat domain-containing protein 1"/>
    <property type="match status" value="1"/>
</dbReference>
<dbReference type="Gene3D" id="1.25.40.20">
    <property type="entry name" value="Ankyrin repeat-containing domain"/>
    <property type="match status" value="2"/>
</dbReference>
<dbReference type="InterPro" id="IPR002110">
    <property type="entry name" value="Ankyrin_rpt"/>
</dbReference>
<dbReference type="InterPro" id="IPR036770">
    <property type="entry name" value="Ankyrin_rpt-contain_sf"/>
</dbReference>
<dbReference type="PANTHER" id="PTHR24126:SF7">
    <property type="entry name" value="ANKYRIN REPEAT DOMAIN-CONTAINING PROTEIN 1"/>
    <property type="match status" value="1"/>
</dbReference>
<dbReference type="PANTHER" id="PTHR24126">
    <property type="entry name" value="ANKYRIN REPEAT, PH AND SEC7 DOMAIN CONTAINING PROTEIN SECG-RELATED"/>
    <property type="match status" value="1"/>
</dbReference>
<dbReference type="Pfam" id="PF12796">
    <property type="entry name" value="Ank_2"/>
    <property type="match status" value="2"/>
</dbReference>
<dbReference type="SMART" id="SM00248">
    <property type="entry name" value="ANK"/>
    <property type="match status" value="4"/>
</dbReference>
<dbReference type="SUPFAM" id="SSF48403">
    <property type="entry name" value="Ankyrin repeat"/>
    <property type="match status" value="1"/>
</dbReference>
<dbReference type="PROSITE" id="PS50297">
    <property type="entry name" value="ANK_REP_REGION"/>
    <property type="match status" value="1"/>
</dbReference>
<dbReference type="PROSITE" id="PS50088">
    <property type="entry name" value="ANK_REPEAT"/>
    <property type="match status" value="4"/>
</dbReference>
<accession>Q9CR42</accession>
<accession>O55014</accession>
<accession>Q3UIF7</accession>
<accession>Q3UJ39</accession>
<accession>Q792Q9</accession>
<evidence type="ECO:0000250" key="1"/>
<evidence type="ECO:0000255" key="2"/>
<evidence type="ECO:0000256" key="3">
    <source>
        <dbReference type="SAM" id="MobiDB-lite"/>
    </source>
</evidence>
<evidence type="ECO:0000269" key="4">
    <source>
    </source>
</evidence>
<evidence type="ECO:0000269" key="5">
    <source>
    </source>
</evidence>
<evidence type="ECO:0000305" key="6"/>